<gene>
    <name evidence="1" type="primary">fis</name>
</gene>
<accession>P0CW85</accession>
<accession>O52534</accession>
<accession>Q84AP2</accession>
<evidence type="ECO:0000255" key="1">
    <source>
        <dbReference type="HAMAP-Rule" id="MF_00166"/>
    </source>
</evidence>
<comment type="function">
    <text evidence="1">Activates ribosomal RNA transcription. Plays a direct role in upstream activation of rRNA promoters.</text>
</comment>
<comment type="subunit">
    <text evidence="1">Homodimer.</text>
</comment>
<comment type="similarity">
    <text evidence="1">Belongs to the transcriptional regulatory Fis family.</text>
</comment>
<organism>
    <name type="scientific">Proteus vulgaris</name>
    <dbReference type="NCBI Taxonomy" id="585"/>
    <lineage>
        <taxon>Bacteria</taxon>
        <taxon>Pseudomonadati</taxon>
        <taxon>Pseudomonadota</taxon>
        <taxon>Gammaproteobacteria</taxon>
        <taxon>Enterobacterales</taxon>
        <taxon>Morganellaceae</taxon>
        <taxon>Proteus</taxon>
    </lineage>
</organism>
<sequence>MFEQRVNSDVLTVATVNSQDQVTQKPLRDSVKQALKNYFAQLNGQDVNDLYELVLAEVEQPLLDMVMQYTRGNQTRAAQMMGINRGTLRKKLK</sequence>
<name>FIS_PROVU</name>
<feature type="chain" id="PRO_0000408965" description="DNA-binding protein Fis">
    <location>
        <begin position="1"/>
        <end position="93" status="greater than"/>
    </location>
</feature>
<feature type="DNA-binding region" description="H-T-H motif" evidence="1">
    <location>
        <begin position="74"/>
        <end position="93"/>
    </location>
</feature>
<feature type="non-terminal residue">
    <location>
        <position position="93"/>
    </location>
</feature>
<reference key="1">
    <citation type="journal article" date="1998" name="J. Bacteriol.">
        <title>Identification and characterization of the fis operon in enteric bacteria.</title>
        <authorList>
            <person name="Beach M.B."/>
            <person name="Osuna R."/>
        </authorList>
    </citation>
    <scope>NUCLEOTIDE SEQUENCE [GENOMIC DNA]</scope>
</reference>
<dbReference type="EMBL" id="AF040379">
    <property type="protein sequence ID" value="AAC77885.1"/>
    <property type="molecule type" value="Genomic_DNA"/>
</dbReference>
<dbReference type="SMR" id="P0CW85"/>
<dbReference type="STRING" id="585.DR95_2015"/>
<dbReference type="eggNOG" id="COG2901">
    <property type="taxonomic scope" value="Bacteria"/>
</dbReference>
<dbReference type="GO" id="GO:0043565">
    <property type="term" value="F:sequence-specific DNA binding"/>
    <property type="evidence" value="ECO:0007669"/>
    <property type="project" value="InterPro"/>
</dbReference>
<dbReference type="GO" id="GO:0006355">
    <property type="term" value="P:regulation of DNA-templated transcription"/>
    <property type="evidence" value="ECO:0007669"/>
    <property type="project" value="InterPro"/>
</dbReference>
<dbReference type="FunFam" id="1.10.10.60:FF:000006">
    <property type="entry name" value="DNA-binding protein Fis"/>
    <property type="match status" value="1"/>
</dbReference>
<dbReference type="Gene3D" id="1.10.10.60">
    <property type="entry name" value="Homeodomain-like"/>
    <property type="match status" value="1"/>
</dbReference>
<dbReference type="HAMAP" id="MF_00166">
    <property type="entry name" value="DNA_binding_Fis"/>
    <property type="match status" value="1"/>
</dbReference>
<dbReference type="InterPro" id="IPR005412">
    <property type="entry name" value="Fis_DNA-bd"/>
</dbReference>
<dbReference type="InterPro" id="IPR009057">
    <property type="entry name" value="Homeodomain-like_sf"/>
</dbReference>
<dbReference type="InterPro" id="IPR002197">
    <property type="entry name" value="HTH_Fis"/>
</dbReference>
<dbReference type="InterPro" id="IPR050207">
    <property type="entry name" value="Trans_regulatory_Fis"/>
</dbReference>
<dbReference type="NCBIfam" id="NF001659">
    <property type="entry name" value="PRK00430.1"/>
    <property type="match status" value="1"/>
</dbReference>
<dbReference type="PANTHER" id="PTHR47918">
    <property type="entry name" value="DNA-BINDING PROTEIN FIS"/>
    <property type="match status" value="1"/>
</dbReference>
<dbReference type="PANTHER" id="PTHR47918:SF1">
    <property type="entry name" value="DNA-BINDING PROTEIN FIS"/>
    <property type="match status" value="1"/>
</dbReference>
<dbReference type="Pfam" id="PF02954">
    <property type="entry name" value="HTH_8"/>
    <property type="match status" value="1"/>
</dbReference>
<dbReference type="PIRSF" id="PIRSF002097">
    <property type="entry name" value="DNA-binding_Fis"/>
    <property type="match status" value="1"/>
</dbReference>
<dbReference type="PRINTS" id="PR01591">
    <property type="entry name" value="DNABINDNGFIS"/>
</dbReference>
<dbReference type="PRINTS" id="PR01590">
    <property type="entry name" value="HTHFIS"/>
</dbReference>
<dbReference type="SUPFAM" id="SSF46689">
    <property type="entry name" value="Homeodomain-like"/>
    <property type="match status" value="1"/>
</dbReference>
<protein>
    <recommendedName>
        <fullName evidence="1">DNA-binding protein Fis</fullName>
    </recommendedName>
</protein>
<keyword id="KW-0010">Activator</keyword>
<keyword id="KW-0238">DNA-binding</keyword>
<keyword id="KW-0804">Transcription</keyword>
<keyword id="KW-0805">Transcription regulation</keyword>
<proteinExistence type="inferred from homology"/>